<keyword id="KW-0329">Glyoxylate bypass</keyword>
<keyword id="KW-0330">Glyoxysome</keyword>
<keyword id="KW-0456">Lyase</keyword>
<keyword id="KW-0460">Magnesium</keyword>
<keyword id="KW-0479">Metal-binding</keyword>
<keyword id="KW-0576">Peroxisome</keyword>
<keyword id="KW-1185">Reference proteome</keyword>
<keyword id="KW-0816">Tricarboxylic acid cycle</keyword>
<protein>
    <recommendedName>
        <fullName evidence="1">Isocitrate lyase</fullName>
        <shortName evidence="4">ICL</shortName>
        <shortName evidence="4">Isocitrase</shortName>
        <shortName evidence="4">Isocitratase</shortName>
        <ecNumber evidence="1">4.1.3.1</ecNumber>
    </recommendedName>
    <alternativeName>
        <fullName evidence="1">Methylisocitrate lyase</fullName>
        <shortName evidence="4">MICA</shortName>
        <ecNumber evidence="1">4.1.3.30</ecNumber>
    </alternativeName>
    <alternativeName>
        <fullName evidence="4">Threo-D(S)-isocitrate glyoxylate-lyase</fullName>
    </alternativeName>
</protein>
<sequence>MSLSVEQEEQKYWEEVEAVKQWWKDSRWRYTKRPFTAEQIVAKRGNLKIEYPSNVQSKKLWKLVEEKFKTKTASFTYGCLDPTMVTQMVKYLDTVYVSGWQSSSTASSTDEPSPDLADYPMNTVPNKVNQLWMAQLFHDRKQREERLRNPKEKRASLANIDYLAPIIADADTGHGGLTAVMKLTKLFIERGAAGIHIEDQAPGTKKCGHMAGKVLVPISEHINRLVAIRAQADIMGTDLLAIARTDSEAATLITSTIDPRDHAFVVGSTNPNLEPLNDLMIAAERAGKNGAELQAIEDSWTAKAGLKRFEDAVIDQIKASSAANKQAAIDAFLREIKGKSNKEARAIARQILGTDIFWDWDAPRTREGYYRYQGGCQCAINRAVAFAPFADLIWMESKLPDYAQAKEFAEGVHAVWPQQKLAYNLSPSFNWKAAMPRDEQETYIRRLGELGYCWQFITLAGLHTTALISDQFAKAYAKQGMRAYGELVQEPEMENKVDVVTHQKWSGANYVDELLKMVTGGVSSTSAMGKGVTEDQFK</sequence>
<feature type="chain" id="PRO_0000068788" description="Isocitrate lyase">
    <location>
        <begin position="1"/>
        <end position="538"/>
    </location>
</feature>
<feature type="active site" description="Proton acceptor" evidence="3">
    <location>
        <position position="207"/>
    </location>
</feature>
<feature type="binding site" evidence="3">
    <location>
        <begin position="98"/>
        <end position="100"/>
    </location>
    <ligand>
        <name>substrate</name>
    </ligand>
</feature>
<feature type="binding site" evidence="3">
    <location>
        <position position="169"/>
    </location>
    <ligand>
        <name>Mg(2+)</name>
        <dbReference type="ChEBI" id="CHEBI:18420"/>
    </ligand>
</feature>
<feature type="binding site" evidence="3">
    <location>
        <begin position="208"/>
        <end position="209"/>
    </location>
    <ligand>
        <name>substrate</name>
    </ligand>
</feature>
<feature type="binding site" evidence="3">
    <location>
        <position position="244"/>
    </location>
    <ligand>
        <name>substrate</name>
    </ligand>
</feature>
<feature type="binding site" evidence="3">
    <location>
        <begin position="424"/>
        <end position="428"/>
    </location>
    <ligand>
        <name>substrate</name>
    </ligand>
</feature>
<feature type="binding site" evidence="3">
    <location>
        <position position="458"/>
    </location>
    <ligand>
        <name>substrate</name>
    </ligand>
</feature>
<feature type="sequence conflict" description="In Ref. 1; AAK72548/AAL16915." evidence="4" ref="1">
    <original>N</original>
    <variation>T</variation>
    <location>
        <position position="272"/>
    </location>
</feature>
<feature type="sequence conflict" description="In Ref. 1; AAK72548/AAL16915." evidence="4" ref="1">
    <original>AI</original>
    <variation>TT</variation>
    <location>
        <begin position="328"/>
        <end position="329"/>
    </location>
</feature>
<feature type="sequence conflict" description="In Ref. 1; AAK72548/AAL16915." evidence="4" ref="1">
    <original>V</original>
    <variation>I</variation>
    <location>
        <position position="522"/>
    </location>
</feature>
<organism>
    <name type="scientific">Coccidioides immitis (strain RS)</name>
    <name type="common">Valley fever fungus</name>
    <dbReference type="NCBI Taxonomy" id="246410"/>
    <lineage>
        <taxon>Eukaryota</taxon>
        <taxon>Fungi</taxon>
        <taxon>Dikarya</taxon>
        <taxon>Ascomycota</taxon>
        <taxon>Pezizomycotina</taxon>
        <taxon>Eurotiomycetes</taxon>
        <taxon>Eurotiomycetidae</taxon>
        <taxon>Onygenales</taxon>
        <taxon>Onygenaceae</taxon>
        <taxon>Coccidioides</taxon>
    </lineage>
</organism>
<accession>Q96TP5</accession>
<accession>J3KKS8</accession>
<accession>Q1E625</accession>
<proteinExistence type="evidence at transcript level"/>
<comment type="function">
    <text evidence="1">Catalyzes the formation of succinate and glyoxylate from isocitrate, a key step of the glyoxylate cycle, which operates as an anaplerotic route for replenishing the tricarboxylic acid cycle. Required for growth on ethanol or acetate, but dispensable when fermentable carbon sources are available. Also acts on 2-methylisocitrate.</text>
</comment>
<comment type="catalytic activity">
    <reaction evidence="1">
        <text>D-threo-isocitrate = glyoxylate + succinate</text>
        <dbReference type="Rhea" id="RHEA:13245"/>
        <dbReference type="ChEBI" id="CHEBI:15562"/>
        <dbReference type="ChEBI" id="CHEBI:30031"/>
        <dbReference type="ChEBI" id="CHEBI:36655"/>
        <dbReference type="EC" id="4.1.3.1"/>
    </reaction>
</comment>
<comment type="catalytic activity">
    <reaction evidence="1">
        <text>(2S,3R)-3-hydroxybutane-1,2,3-tricarboxylate = pyruvate + succinate</text>
        <dbReference type="Rhea" id="RHEA:16809"/>
        <dbReference type="ChEBI" id="CHEBI:15361"/>
        <dbReference type="ChEBI" id="CHEBI:30031"/>
        <dbReference type="ChEBI" id="CHEBI:57429"/>
        <dbReference type="EC" id="4.1.3.30"/>
    </reaction>
</comment>
<comment type="cofactor">
    <cofactor evidence="3">
        <name>Mg(2+)</name>
        <dbReference type="ChEBI" id="CHEBI:18420"/>
    </cofactor>
</comment>
<comment type="pathway">
    <text>Carbohydrate metabolism; glyoxylate cycle; (S)-malate from isocitrate: step 1/2.</text>
</comment>
<comment type="subunit">
    <text evidence="1">Homotetramer.</text>
</comment>
<comment type="subcellular location">
    <subcellularLocation>
        <location evidence="2">Glyoxysome</location>
    </subcellularLocation>
</comment>
<comment type="similarity">
    <text evidence="4">Belongs to the isocitrate lyase/PEP mutase superfamily. Isocitrate lyase family.</text>
</comment>
<reference key="1">
    <citation type="submission" date="2001-10" db="EMBL/GenBank/DDBJ databases">
        <title>Cloning of isocitrate lyase of Coccidioides immitis.</title>
        <authorList>
            <person name="Shi Q."/>
            <person name="Ivey F.D."/>
            <person name="Woitaske M.D."/>
            <person name="Magee D.M."/>
            <person name="Cox R.A."/>
        </authorList>
    </citation>
    <scope>NUCLEOTIDE SEQUENCE [GENOMIC DNA / MRNA]</scope>
</reference>
<reference key="2">
    <citation type="journal article" date="2009" name="Genome Res.">
        <title>Comparative genomic analyses of the human fungal pathogens Coccidioides and their relatives.</title>
        <authorList>
            <person name="Sharpton T.J."/>
            <person name="Stajich J.E."/>
            <person name="Rounsley S.D."/>
            <person name="Gardner M.J."/>
            <person name="Wortman J.R."/>
            <person name="Jordar V.S."/>
            <person name="Maiti R."/>
            <person name="Kodira C.D."/>
            <person name="Neafsey D.E."/>
            <person name="Zeng Q."/>
            <person name="Hung C.-Y."/>
            <person name="McMahan C."/>
            <person name="Muszewska A."/>
            <person name="Grynberg M."/>
            <person name="Mandel M.A."/>
            <person name="Kellner E.M."/>
            <person name="Barker B.M."/>
            <person name="Galgiani J.N."/>
            <person name="Orbach M.J."/>
            <person name="Kirkland T.N."/>
            <person name="Cole G.T."/>
            <person name="Henn M.R."/>
            <person name="Birren B.W."/>
            <person name="Taylor J.W."/>
        </authorList>
    </citation>
    <scope>NUCLEOTIDE SEQUENCE [LARGE SCALE GENOMIC DNA]</scope>
    <source>
        <strain>RS</strain>
    </source>
</reference>
<reference key="3">
    <citation type="journal article" date="2010" name="Genome Res.">
        <title>Population genomic sequencing of Coccidioides fungi reveals recent hybridization and transposon control.</title>
        <authorList>
            <person name="Neafsey D.E."/>
            <person name="Barker B.M."/>
            <person name="Sharpton T.J."/>
            <person name="Stajich J.E."/>
            <person name="Park D.J."/>
            <person name="Whiston E."/>
            <person name="Hung C.-Y."/>
            <person name="McMahan C."/>
            <person name="White J."/>
            <person name="Sykes S."/>
            <person name="Heiman D."/>
            <person name="Young S."/>
            <person name="Zeng Q."/>
            <person name="Abouelleil A."/>
            <person name="Aftuck L."/>
            <person name="Bessette D."/>
            <person name="Brown A."/>
            <person name="FitzGerald M."/>
            <person name="Lui A."/>
            <person name="Macdonald J.P."/>
            <person name="Priest M."/>
            <person name="Orbach M.J."/>
            <person name="Galgiani J.N."/>
            <person name="Kirkland T.N."/>
            <person name="Cole G.T."/>
            <person name="Birren B.W."/>
            <person name="Henn M.R."/>
            <person name="Taylor J.W."/>
            <person name="Rounsley S.D."/>
        </authorList>
    </citation>
    <scope>GENOME REANNOTATION</scope>
    <source>
        <strain>RS</strain>
    </source>
</reference>
<dbReference type="EC" id="4.1.3.1" evidence="1"/>
<dbReference type="EC" id="4.1.3.30" evidence="1"/>
<dbReference type="EMBL" id="AF420484">
    <property type="protein sequence ID" value="AAL16915.1"/>
    <property type="molecule type" value="Genomic_DNA"/>
</dbReference>
<dbReference type="EMBL" id="AY038602">
    <property type="protein sequence ID" value="AAK72548.2"/>
    <property type="molecule type" value="mRNA"/>
</dbReference>
<dbReference type="EMBL" id="GG704911">
    <property type="protein sequence ID" value="EAS36634.3"/>
    <property type="molecule type" value="Genomic_DNA"/>
</dbReference>
<dbReference type="RefSeq" id="XP_001248217.1">
    <property type="nucleotide sequence ID" value="XM_001248216.2"/>
</dbReference>
<dbReference type="SMR" id="Q96TP5"/>
<dbReference type="FunCoup" id="Q96TP5">
    <property type="interactions" value="162"/>
</dbReference>
<dbReference type="STRING" id="246410.Q96TP5"/>
<dbReference type="GeneID" id="4567087"/>
<dbReference type="KEGG" id="cim:CIMG_01988"/>
<dbReference type="VEuPathDB" id="FungiDB:CIMG_01988"/>
<dbReference type="InParanoid" id="Q96TP5"/>
<dbReference type="OMA" id="YVSGWQV"/>
<dbReference type="OrthoDB" id="4078635at2759"/>
<dbReference type="UniPathway" id="UPA00703">
    <property type="reaction ID" value="UER00719"/>
</dbReference>
<dbReference type="Proteomes" id="UP000001261">
    <property type="component" value="Unassembled WGS sequence"/>
</dbReference>
<dbReference type="GO" id="GO:0009514">
    <property type="term" value="C:glyoxysome"/>
    <property type="evidence" value="ECO:0007669"/>
    <property type="project" value="UniProtKB-SubCell"/>
</dbReference>
<dbReference type="GO" id="GO:0004451">
    <property type="term" value="F:isocitrate lyase activity"/>
    <property type="evidence" value="ECO:0007669"/>
    <property type="project" value="UniProtKB-EC"/>
</dbReference>
<dbReference type="GO" id="GO:0046872">
    <property type="term" value="F:metal ion binding"/>
    <property type="evidence" value="ECO:0007669"/>
    <property type="project" value="UniProtKB-KW"/>
</dbReference>
<dbReference type="GO" id="GO:0046421">
    <property type="term" value="F:methylisocitrate lyase activity"/>
    <property type="evidence" value="ECO:0007669"/>
    <property type="project" value="UniProtKB-EC"/>
</dbReference>
<dbReference type="GO" id="GO:0006097">
    <property type="term" value="P:glyoxylate cycle"/>
    <property type="evidence" value="ECO:0007669"/>
    <property type="project" value="UniProtKB-UniPathway"/>
</dbReference>
<dbReference type="GO" id="GO:0006099">
    <property type="term" value="P:tricarboxylic acid cycle"/>
    <property type="evidence" value="ECO:0007669"/>
    <property type="project" value="UniProtKB-KW"/>
</dbReference>
<dbReference type="FunFam" id="1.10.10.850:FF:000001">
    <property type="entry name" value="Isocitrate lyase"/>
    <property type="match status" value="1"/>
</dbReference>
<dbReference type="Gene3D" id="1.10.10.850">
    <property type="match status" value="1"/>
</dbReference>
<dbReference type="Gene3D" id="3.20.20.60">
    <property type="entry name" value="Phosphoenolpyruvate-binding domains"/>
    <property type="match status" value="1"/>
</dbReference>
<dbReference type="InterPro" id="IPR006254">
    <property type="entry name" value="Isocitrate_lyase"/>
</dbReference>
<dbReference type="InterPro" id="IPR018523">
    <property type="entry name" value="Isocitrate_lyase_ph_CS"/>
</dbReference>
<dbReference type="InterPro" id="IPR015813">
    <property type="entry name" value="Pyrv/PenolPyrv_kinase-like_dom"/>
</dbReference>
<dbReference type="InterPro" id="IPR040442">
    <property type="entry name" value="Pyrv_kinase-like_dom_sf"/>
</dbReference>
<dbReference type="NCBIfam" id="TIGR01346">
    <property type="entry name" value="isocit_lyase"/>
    <property type="match status" value="1"/>
</dbReference>
<dbReference type="PANTHER" id="PTHR21631:SF3">
    <property type="entry name" value="BIFUNCTIONAL GLYOXYLATE CYCLE PROTEIN"/>
    <property type="match status" value="1"/>
</dbReference>
<dbReference type="PANTHER" id="PTHR21631">
    <property type="entry name" value="ISOCITRATE LYASE/MALATE SYNTHASE"/>
    <property type="match status" value="1"/>
</dbReference>
<dbReference type="Pfam" id="PF00463">
    <property type="entry name" value="ICL"/>
    <property type="match status" value="1"/>
</dbReference>
<dbReference type="PIRSF" id="PIRSF001362">
    <property type="entry name" value="Isocit_lyase"/>
    <property type="match status" value="1"/>
</dbReference>
<dbReference type="SUPFAM" id="SSF51621">
    <property type="entry name" value="Phosphoenolpyruvate/pyruvate domain"/>
    <property type="match status" value="1"/>
</dbReference>
<dbReference type="PROSITE" id="PS00161">
    <property type="entry name" value="ISOCITRATE_LYASE"/>
    <property type="match status" value="1"/>
</dbReference>
<name>ACEA_COCIM</name>
<gene>
    <name evidence="1" type="primary">ICL1</name>
    <name type="ORF">CIMG_01988</name>
</gene>
<evidence type="ECO:0000250" key="1">
    <source>
        <dbReference type="UniProtKB" id="P28240"/>
    </source>
</evidence>
<evidence type="ECO:0000250" key="2">
    <source>
        <dbReference type="UniProtKB" id="P28299"/>
    </source>
</evidence>
<evidence type="ECO:0000250" key="3">
    <source>
        <dbReference type="UniProtKB" id="P9WKK7"/>
    </source>
</evidence>
<evidence type="ECO:0000305" key="4"/>